<accession>A2VD13</accession>
<dbReference type="EMBL" id="AABR06070420">
    <property type="status" value="NOT_ANNOTATED_CDS"/>
    <property type="molecule type" value="Genomic_DNA"/>
</dbReference>
<dbReference type="EMBL" id="BC129116">
    <property type="protein sequence ID" value="AAI29117.1"/>
    <property type="molecule type" value="mRNA"/>
</dbReference>
<dbReference type="RefSeq" id="NP_001388048.1">
    <property type="nucleotide sequence ID" value="NM_001401119.1"/>
</dbReference>
<dbReference type="RefSeq" id="XP_006248933.1">
    <property type="nucleotide sequence ID" value="XM_006248871.1"/>
</dbReference>
<dbReference type="RefSeq" id="XP_038945270.1">
    <property type="nucleotide sequence ID" value="XM_039089342.2"/>
</dbReference>
<dbReference type="SMR" id="A2VD13"/>
<dbReference type="FunCoup" id="A2VD13">
    <property type="interactions" value="2701"/>
</dbReference>
<dbReference type="STRING" id="10116.ENSRNOP00000068093"/>
<dbReference type="GlyGen" id="A2VD13">
    <property type="glycosylation" value="1 site"/>
</dbReference>
<dbReference type="PhosphoSitePlus" id="A2VD13"/>
<dbReference type="PaxDb" id="10116-ENSRNOP00000068093"/>
<dbReference type="PeptideAtlas" id="A2VD13"/>
<dbReference type="Ensembl" id="ENSRNOT00000076896.3">
    <property type="protein sequence ID" value="ENSRNOP00000068093.1"/>
    <property type="gene ID" value="ENSRNOG00000000987.9"/>
</dbReference>
<dbReference type="GeneID" id="304278"/>
<dbReference type="AGR" id="RGD:1311473"/>
<dbReference type="RGD" id="1311473">
    <property type="gene designation" value="Ptcd1"/>
</dbReference>
<dbReference type="eggNOG" id="KOG4197">
    <property type="taxonomic scope" value="Eukaryota"/>
</dbReference>
<dbReference type="GeneTree" id="ENSGT00940000153974"/>
<dbReference type="HOGENOM" id="CLU_021952_0_0_1"/>
<dbReference type="InParanoid" id="A2VD13"/>
<dbReference type="OMA" id="EHPENTG"/>
<dbReference type="TreeFam" id="TF324792"/>
<dbReference type="PRO" id="PR:A2VD13"/>
<dbReference type="Proteomes" id="UP000002494">
    <property type="component" value="Chromosome 12"/>
</dbReference>
<dbReference type="Bgee" id="ENSRNOG00000000987">
    <property type="expression patterns" value="Expressed in pancreas and 20 other cell types or tissues"/>
</dbReference>
<dbReference type="ExpressionAtlas" id="A2VD13">
    <property type="expression patterns" value="baseline and differential"/>
</dbReference>
<dbReference type="GO" id="GO:0005759">
    <property type="term" value="C:mitochondrial matrix"/>
    <property type="evidence" value="ECO:0000314"/>
    <property type="project" value="UniProtKB"/>
</dbReference>
<dbReference type="GO" id="GO:0000049">
    <property type="term" value="F:tRNA binding"/>
    <property type="evidence" value="ECO:0000250"/>
    <property type="project" value="UniProtKB"/>
</dbReference>
<dbReference type="GO" id="GO:0032543">
    <property type="term" value="P:mitochondrial translation"/>
    <property type="evidence" value="ECO:0007669"/>
    <property type="project" value="Ensembl"/>
</dbReference>
<dbReference type="GO" id="GO:0042780">
    <property type="term" value="P:tRNA 3'-end processing"/>
    <property type="evidence" value="ECO:0000250"/>
    <property type="project" value="UniProtKB"/>
</dbReference>
<dbReference type="FunFam" id="1.25.40.10:FF:000408">
    <property type="entry name" value="Pentatricopeptide repeat domain 1"/>
    <property type="match status" value="1"/>
</dbReference>
<dbReference type="FunFam" id="1.25.40.10:FF:000255">
    <property type="entry name" value="Pentatricopeptide repeat-containing protein 1, mitochondrial"/>
    <property type="match status" value="1"/>
</dbReference>
<dbReference type="FunFam" id="1.25.40.10:FF:000321">
    <property type="entry name" value="pentatricopeptide repeat-containing protein 1, mitochondrial isoform X1"/>
    <property type="match status" value="1"/>
</dbReference>
<dbReference type="Gene3D" id="1.25.40.10">
    <property type="entry name" value="Tetratricopeptide repeat domain"/>
    <property type="match status" value="3"/>
</dbReference>
<dbReference type="InterPro" id="IPR002885">
    <property type="entry name" value="Pentatricopeptide_rpt"/>
</dbReference>
<dbReference type="InterPro" id="IPR011990">
    <property type="entry name" value="TPR-like_helical_dom_sf"/>
</dbReference>
<dbReference type="NCBIfam" id="TIGR00756">
    <property type="entry name" value="PPR"/>
    <property type="match status" value="1"/>
</dbReference>
<dbReference type="PANTHER" id="PTHR24014">
    <property type="entry name" value="2-OXOGLUTARATE AND IRON-DEPENDENT OXYGENASE DOMAIN-CONTAINING PROTEIN 2"/>
    <property type="match status" value="1"/>
</dbReference>
<dbReference type="PANTHER" id="PTHR24014:SF6">
    <property type="entry name" value="PENTATRICOPEPTIDE REPEAT-CONTAINING PROTEIN 1, MITOCHONDRIAL"/>
    <property type="match status" value="1"/>
</dbReference>
<dbReference type="Pfam" id="PF13041">
    <property type="entry name" value="PPR_2"/>
    <property type="match status" value="1"/>
</dbReference>
<dbReference type="Pfam" id="PF13812">
    <property type="entry name" value="PPR_3"/>
    <property type="match status" value="1"/>
</dbReference>
<dbReference type="PROSITE" id="PS51375">
    <property type="entry name" value="PPR"/>
    <property type="match status" value="7"/>
</dbReference>
<proteinExistence type="evidence at transcript level"/>
<sequence>MDLLRLSRLFSGPHPIGLSVLQRLDLLRSTQWTGGREGPAWLRAASCSSSSHQKRMSSLCSDSSTPVAPQEEEEEESFGTLSEKFSSRRIFHKSTAQLYNLKLKEQGVEEEELEPRLRQGGRNTPYWYFLQCKRLLKEGKLAEALDLFERQMLKEERLQPLECNYTVLIGGCGRVGYLKKAFRLFNDMKKRDLEPSDATYTALFNVCAESPWKDSALQSALKLRQQLQAQNFQLNLKTYHALLKVAAKCADLRVCLEVFKEIIQKGHAVTEETFCFLLMGCIQDKKTGFRQAMQVWRQMLSLGIKPSRHGYNLLLGAARDCGLGDPEVASRLLLTSQEETILLQPPTGRRLAGGKVQAKTRHGVSVKHVEALERQLFLEPSHKLEGPPAFPEARETSRTQPEVETKAEPGHMGALAPLALKPPDLELQVNLLSLGALSPAVVSFGTVATPADRLALMGGLEGFLGKMAEHRLQPDIKTLTLLAEVVEPGSPAESSLLSILDRHRVEADITFFNTLIRKKSKLGDLEGAKALLPILAKKGIVPNLRTFCNLAIGCHRPRDGMQLLADMKKSQVTPNTHIYSTLINAALKKLDYTYLISILKDMRRNSVPVNEVVIRQLEFAAQYPPTFDRYKEKNTYLEKIDGFRAYYKQWLKVMPAEEPPHPWQEFRDKPVRNQVITENAGGLRDG</sequence>
<organism>
    <name type="scientific">Rattus norvegicus</name>
    <name type="common">Rat</name>
    <dbReference type="NCBI Taxonomy" id="10116"/>
    <lineage>
        <taxon>Eukaryota</taxon>
        <taxon>Metazoa</taxon>
        <taxon>Chordata</taxon>
        <taxon>Craniata</taxon>
        <taxon>Vertebrata</taxon>
        <taxon>Euteleostomi</taxon>
        <taxon>Mammalia</taxon>
        <taxon>Eutheria</taxon>
        <taxon>Euarchontoglires</taxon>
        <taxon>Glires</taxon>
        <taxon>Rodentia</taxon>
        <taxon>Myomorpha</taxon>
        <taxon>Muroidea</taxon>
        <taxon>Muridae</taxon>
        <taxon>Murinae</taxon>
        <taxon>Rattus</taxon>
    </lineage>
</organism>
<comment type="function">
    <text evidence="1">Mitochondrial protein implicated in negative regulation of leucine tRNA levels, as well as negative regulation of mitochondria-encoded proteins and COX activity. Also affects the 3'-processing of mitochondrial tRNAs.</text>
</comment>
<comment type="subunit">
    <text evidence="1">Associates with mitochondrial leucine tRNAs. Interacts with ELAC2.</text>
</comment>
<comment type="subcellular location">
    <subcellularLocation>
        <location evidence="3">Mitochondrion matrix</location>
    </subcellularLocation>
</comment>
<comment type="similarity">
    <text evidence="4">Belongs to the PTCD1 family.</text>
</comment>
<protein>
    <recommendedName>
        <fullName>Pentatricopeptide repeat-containing protein 1, mitochondrial</fullName>
    </recommendedName>
</protein>
<gene>
    <name type="primary">Ptcd1</name>
</gene>
<keyword id="KW-0496">Mitochondrion</keyword>
<keyword id="KW-1185">Reference proteome</keyword>
<keyword id="KW-0677">Repeat</keyword>
<keyword id="KW-0819">tRNA processing</keyword>
<evidence type="ECO:0000250" key="1"/>
<evidence type="ECO:0000256" key="2">
    <source>
        <dbReference type="SAM" id="MobiDB-lite"/>
    </source>
</evidence>
<evidence type="ECO:0000269" key="3">
    <source>
    </source>
</evidence>
<evidence type="ECO:0000305" key="4"/>
<feature type="chain" id="PRO_0000420158" description="Pentatricopeptide repeat-containing protein 1, mitochondrial">
    <location>
        <begin position="1"/>
        <end position="686"/>
    </location>
</feature>
<feature type="repeat" description="PPR 1">
    <location>
        <begin position="124"/>
        <end position="160"/>
    </location>
</feature>
<feature type="repeat" description="PPR 2">
    <location>
        <begin position="161"/>
        <end position="195"/>
    </location>
</feature>
<feature type="repeat" description="PPR 3">
    <location>
        <begin position="196"/>
        <end position="234"/>
    </location>
</feature>
<feature type="repeat" description="PPR 4">
    <location>
        <begin position="235"/>
        <end position="269"/>
    </location>
</feature>
<feature type="repeat" description="PPR 5">
    <location>
        <begin position="270"/>
        <end position="306"/>
    </location>
</feature>
<feature type="repeat" description="PPR 6">
    <location>
        <begin position="508"/>
        <end position="542"/>
    </location>
</feature>
<feature type="repeat" description="PPR 7">
    <location>
        <begin position="575"/>
        <end position="609"/>
    </location>
</feature>
<feature type="region of interest" description="Disordered" evidence="2">
    <location>
        <begin position="55"/>
        <end position="79"/>
    </location>
</feature>
<feature type="region of interest" description="Disordered" evidence="2">
    <location>
        <begin position="383"/>
        <end position="407"/>
    </location>
</feature>
<feature type="compositionally biased region" description="Polar residues" evidence="2">
    <location>
        <begin position="55"/>
        <end position="67"/>
    </location>
</feature>
<feature type="compositionally biased region" description="Basic and acidic residues" evidence="2">
    <location>
        <begin position="392"/>
        <end position="407"/>
    </location>
</feature>
<reference key="1">
    <citation type="journal article" date="2004" name="Nature">
        <title>Genome sequence of the Brown Norway rat yields insights into mammalian evolution.</title>
        <authorList>
            <person name="Gibbs R.A."/>
            <person name="Weinstock G.M."/>
            <person name="Metzker M.L."/>
            <person name="Muzny D.M."/>
            <person name="Sodergren E.J."/>
            <person name="Scherer S."/>
            <person name="Scott G."/>
            <person name="Steffen D."/>
            <person name="Worley K.C."/>
            <person name="Burch P.E."/>
            <person name="Okwuonu G."/>
            <person name="Hines S."/>
            <person name="Lewis L."/>
            <person name="Deramo C."/>
            <person name="Delgado O."/>
            <person name="Dugan-Rocha S."/>
            <person name="Miner G."/>
            <person name="Morgan M."/>
            <person name="Hawes A."/>
            <person name="Gill R."/>
            <person name="Holt R.A."/>
            <person name="Adams M.D."/>
            <person name="Amanatides P.G."/>
            <person name="Baden-Tillson H."/>
            <person name="Barnstead M."/>
            <person name="Chin S."/>
            <person name="Evans C.A."/>
            <person name="Ferriera S."/>
            <person name="Fosler C."/>
            <person name="Glodek A."/>
            <person name="Gu Z."/>
            <person name="Jennings D."/>
            <person name="Kraft C.L."/>
            <person name="Nguyen T."/>
            <person name="Pfannkoch C.M."/>
            <person name="Sitter C."/>
            <person name="Sutton G.G."/>
            <person name="Venter J.C."/>
            <person name="Woodage T."/>
            <person name="Smith D."/>
            <person name="Lee H.-M."/>
            <person name="Gustafson E."/>
            <person name="Cahill P."/>
            <person name="Kana A."/>
            <person name="Doucette-Stamm L."/>
            <person name="Weinstock K."/>
            <person name="Fechtel K."/>
            <person name="Weiss R.B."/>
            <person name="Dunn D.M."/>
            <person name="Green E.D."/>
            <person name="Blakesley R.W."/>
            <person name="Bouffard G.G."/>
            <person name="De Jong P.J."/>
            <person name="Osoegawa K."/>
            <person name="Zhu B."/>
            <person name="Marra M."/>
            <person name="Schein J."/>
            <person name="Bosdet I."/>
            <person name="Fjell C."/>
            <person name="Jones S."/>
            <person name="Krzywinski M."/>
            <person name="Mathewson C."/>
            <person name="Siddiqui A."/>
            <person name="Wye N."/>
            <person name="McPherson J."/>
            <person name="Zhao S."/>
            <person name="Fraser C.M."/>
            <person name="Shetty J."/>
            <person name="Shatsman S."/>
            <person name="Geer K."/>
            <person name="Chen Y."/>
            <person name="Abramzon S."/>
            <person name="Nierman W.C."/>
            <person name="Havlak P.H."/>
            <person name="Chen R."/>
            <person name="Durbin K.J."/>
            <person name="Egan A."/>
            <person name="Ren Y."/>
            <person name="Song X.-Z."/>
            <person name="Li B."/>
            <person name="Liu Y."/>
            <person name="Qin X."/>
            <person name="Cawley S."/>
            <person name="Cooney A.J."/>
            <person name="D'Souza L.M."/>
            <person name="Martin K."/>
            <person name="Wu J.Q."/>
            <person name="Gonzalez-Garay M.L."/>
            <person name="Jackson A.R."/>
            <person name="Kalafus K.J."/>
            <person name="McLeod M.P."/>
            <person name="Milosavljevic A."/>
            <person name="Virk D."/>
            <person name="Volkov A."/>
            <person name="Wheeler D.A."/>
            <person name="Zhang Z."/>
            <person name="Bailey J.A."/>
            <person name="Eichler E.E."/>
            <person name="Tuzun E."/>
            <person name="Birney E."/>
            <person name="Mongin E."/>
            <person name="Ureta-Vidal A."/>
            <person name="Woodwark C."/>
            <person name="Zdobnov E."/>
            <person name="Bork P."/>
            <person name="Suyama M."/>
            <person name="Torrents D."/>
            <person name="Alexandersson M."/>
            <person name="Trask B.J."/>
            <person name="Young J.M."/>
            <person name="Huang H."/>
            <person name="Wang H."/>
            <person name="Xing H."/>
            <person name="Daniels S."/>
            <person name="Gietzen D."/>
            <person name="Schmidt J."/>
            <person name="Stevens K."/>
            <person name="Vitt U."/>
            <person name="Wingrove J."/>
            <person name="Camara F."/>
            <person name="Mar Alba M."/>
            <person name="Abril J.F."/>
            <person name="Guigo R."/>
            <person name="Smit A."/>
            <person name="Dubchak I."/>
            <person name="Rubin E.M."/>
            <person name="Couronne O."/>
            <person name="Poliakov A."/>
            <person name="Huebner N."/>
            <person name="Ganten D."/>
            <person name="Goesele C."/>
            <person name="Hummel O."/>
            <person name="Kreitler T."/>
            <person name="Lee Y.-A."/>
            <person name="Monti J."/>
            <person name="Schulz H."/>
            <person name="Zimdahl H."/>
            <person name="Himmelbauer H."/>
            <person name="Lehrach H."/>
            <person name="Jacob H.J."/>
            <person name="Bromberg S."/>
            <person name="Gullings-Handley J."/>
            <person name="Jensen-Seaman M.I."/>
            <person name="Kwitek A.E."/>
            <person name="Lazar J."/>
            <person name="Pasko D."/>
            <person name="Tonellato P.J."/>
            <person name="Twigger S."/>
            <person name="Ponting C.P."/>
            <person name="Duarte J.M."/>
            <person name="Rice S."/>
            <person name="Goodstadt L."/>
            <person name="Beatson S.A."/>
            <person name="Emes R.D."/>
            <person name="Winter E.E."/>
            <person name="Webber C."/>
            <person name="Brandt P."/>
            <person name="Nyakatura G."/>
            <person name="Adetobi M."/>
            <person name="Chiaromonte F."/>
            <person name="Elnitski L."/>
            <person name="Eswara P."/>
            <person name="Hardison R.C."/>
            <person name="Hou M."/>
            <person name="Kolbe D."/>
            <person name="Makova K."/>
            <person name="Miller W."/>
            <person name="Nekrutenko A."/>
            <person name="Riemer C."/>
            <person name="Schwartz S."/>
            <person name="Taylor J."/>
            <person name="Yang S."/>
            <person name="Zhang Y."/>
            <person name="Lindpaintner K."/>
            <person name="Andrews T.D."/>
            <person name="Caccamo M."/>
            <person name="Clamp M."/>
            <person name="Clarke L."/>
            <person name="Curwen V."/>
            <person name="Durbin R.M."/>
            <person name="Eyras E."/>
            <person name="Searle S.M."/>
            <person name="Cooper G.M."/>
            <person name="Batzoglou S."/>
            <person name="Brudno M."/>
            <person name="Sidow A."/>
            <person name="Stone E.A."/>
            <person name="Payseur B.A."/>
            <person name="Bourque G."/>
            <person name="Lopez-Otin C."/>
            <person name="Puente X.S."/>
            <person name="Chakrabarti K."/>
            <person name="Chatterji S."/>
            <person name="Dewey C."/>
            <person name="Pachter L."/>
            <person name="Bray N."/>
            <person name="Yap V.B."/>
            <person name="Caspi A."/>
            <person name="Tesler G."/>
            <person name="Pevzner P.A."/>
            <person name="Haussler D."/>
            <person name="Roskin K.M."/>
            <person name="Baertsch R."/>
            <person name="Clawson H."/>
            <person name="Furey T.S."/>
            <person name="Hinrichs A.S."/>
            <person name="Karolchik D."/>
            <person name="Kent W.J."/>
            <person name="Rosenbloom K.R."/>
            <person name="Trumbower H."/>
            <person name="Weirauch M."/>
            <person name="Cooper D.N."/>
            <person name="Stenson P.D."/>
            <person name="Ma B."/>
            <person name="Brent M."/>
            <person name="Arumugam M."/>
            <person name="Shteynberg D."/>
            <person name="Copley R.R."/>
            <person name="Taylor M.S."/>
            <person name="Riethman H."/>
            <person name="Mudunuri U."/>
            <person name="Peterson J."/>
            <person name="Guyer M."/>
            <person name="Felsenfeld A."/>
            <person name="Old S."/>
            <person name="Mockrin S."/>
            <person name="Collins F.S."/>
        </authorList>
    </citation>
    <scope>NUCLEOTIDE SEQUENCE [LARGE SCALE GENOMIC DNA]</scope>
    <source>
        <strain>Brown Norway</strain>
    </source>
</reference>
<reference key="2">
    <citation type="journal article" date="2004" name="Genome Res.">
        <title>The status, quality, and expansion of the NIH full-length cDNA project: the Mammalian Gene Collection (MGC).</title>
        <authorList>
            <consortium name="The MGC Project Team"/>
        </authorList>
    </citation>
    <scope>NUCLEOTIDE SEQUENCE [LARGE SCALE MRNA]</scope>
    <source>
        <tissue>Testis</tissue>
    </source>
</reference>
<reference key="3">
    <citation type="journal article" date="2009" name="Nucleic Acids Res.">
        <title>Pentatricopeptide repeat domain protein 1 lowers the levels of mitochondrial leucine tRNAs in cells.</title>
        <authorList>
            <person name="Rackham O."/>
            <person name="Davies S.M."/>
            <person name="Shearwood A.M."/>
            <person name="Hamilton K.L."/>
            <person name="Whelan J."/>
            <person name="Filipovska A."/>
        </authorList>
    </citation>
    <scope>SUBCELLULAR LOCATION</scope>
</reference>
<name>PTCD1_RAT</name>